<feature type="chain" id="PRO_0000434008" description="DNA-directed RNA polymerase I subunit 1">
    <location>
        <begin position="1"/>
        <end position="1670"/>
    </location>
</feature>
<feature type="region of interest" description="Disordered" evidence="3">
    <location>
        <begin position="154"/>
        <end position="185"/>
    </location>
</feature>
<feature type="region of interest" description="Disordered" evidence="3">
    <location>
        <begin position="255"/>
        <end position="293"/>
    </location>
</feature>
<feature type="region of interest" description="Bridging helix" evidence="4">
    <location>
        <begin position="1005"/>
        <end position="1017"/>
    </location>
</feature>
<feature type="region of interest" description="Disordered" evidence="3">
    <location>
        <begin position="1318"/>
        <end position="1437"/>
    </location>
</feature>
<feature type="compositionally biased region" description="Acidic residues" evidence="3">
    <location>
        <begin position="176"/>
        <end position="185"/>
    </location>
</feature>
<feature type="compositionally biased region" description="Acidic residues" evidence="3">
    <location>
        <begin position="262"/>
        <end position="279"/>
    </location>
</feature>
<feature type="compositionally biased region" description="Basic and acidic residues" evidence="3">
    <location>
        <begin position="280"/>
        <end position="293"/>
    </location>
</feature>
<feature type="compositionally biased region" description="Acidic residues" evidence="3">
    <location>
        <begin position="1339"/>
        <end position="1354"/>
    </location>
</feature>
<feature type="compositionally biased region" description="Acidic residues" evidence="3">
    <location>
        <begin position="1366"/>
        <end position="1379"/>
    </location>
</feature>
<feature type="compositionally biased region" description="Acidic residues" evidence="3">
    <location>
        <begin position="1388"/>
        <end position="1399"/>
    </location>
</feature>
<feature type="compositionally biased region" description="Basic and acidic residues" evidence="3">
    <location>
        <begin position="1415"/>
        <end position="1429"/>
    </location>
</feature>
<feature type="binding site" evidence="1">
    <location>
        <position position="79"/>
    </location>
    <ligand>
        <name>Zn(2+)</name>
        <dbReference type="ChEBI" id="CHEBI:29105"/>
        <label>1</label>
    </ligand>
</feature>
<feature type="binding site" evidence="1">
    <location>
        <position position="82"/>
    </location>
    <ligand>
        <name>Zn(2+)</name>
        <dbReference type="ChEBI" id="CHEBI:29105"/>
        <label>1</label>
    </ligand>
</feature>
<feature type="binding site" evidence="1">
    <location>
        <position position="89"/>
    </location>
    <ligand>
        <name>Zn(2+)</name>
        <dbReference type="ChEBI" id="CHEBI:29105"/>
        <label>1</label>
    </ligand>
</feature>
<feature type="binding site" evidence="1">
    <location>
        <position position="92"/>
    </location>
    <ligand>
        <name>Zn(2+)</name>
        <dbReference type="ChEBI" id="CHEBI:29105"/>
        <label>1</label>
    </ligand>
</feature>
<feature type="binding site" evidence="1">
    <location>
        <position position="119"/>
    </location>
    <ligand>
        <name>Zn(2+)</name>
        <dbReference type="ChEBI" id="CHEBI:29105"/>
        <label>2</label>
    </ligand>
</feature>
<feature type="binding site" evidence="1">
    <location>
        <position position="122"/>
    </location>
    <ligand>
        <name>Zn(2+)</name>
        <dbReference type="ChEBI" id="CHEBI:29105"/>
        <label>2</label>
    </ligand>
</feature>
<feature type="binding site" evidence="1">
    <location>
        <position position="213"/>
    </location>
    <ligand>
        <name>Zn(2+)</name>
        <dbReference type="ChEBI" id="CHEBI:29105"/>
        <label>2</label>
    </ligand>
</feature>
<feature type="binding site" evidence="1">
    <location>
        <position position="216"/>
    </location>
    <ligand>
        <name>Zn(2+)</name>
        <dbReference type="ChEBI" id="CHEBI:29105"/>
        <label>2</label>
    </ligand>
</feature>
<feature type="binding site" evidence="1">
    <location>
        <position position="602"/>
    </location>
    <ligand>
        <name>Mg(2+)</name>
        <dbReference type="ChEBI" id="CHEBI:18420"/>
        <note>catalytic</note>
    </ligand>
</feature>
<feature type="binding site" evidence="1">
    <location>
        <position position="604"/>
    </location>
    <ligand>
        <name>Mg(2+)</name>
        <dbReference type="ChEBI" id="CHEBI:18420"/>
        <note>catalytic</note>
    </ligand>
</feature>
<feature type="binding site" evidence="1">
    <location>
        <position position="606"/>
    </location>
    <ligand>
        <name>Mg(2+)</name>
        <dbReference type="ChEBI" id="CHEBI:18420"/>
        <note>catalytic</note>
    </ligand>
</feature>
<organism>
    <name type="scientific">Arabidopsis thaliana</name>
    <name type="common">Mouse-ear cress</name>
    <dbReference type="NCBI Taxonomy" id="3702"/>
    <lineage>
        <taxon>Eukaryota</taxon>
        <taxon>Viridiplantae</taxon>
        <taxon>Streptophyta</taxon>
        <taxon>Embryophyta</taxon>
        <taxon>Tracheophyta</taxon>
        <taxon>Spermatophyta</taxon>
        <taxon>Magnoliopsida</taxon>
        <taxon>eudicotyledons</taxon>
        <taxon>Gunneridae</taxon>
        <taxon>Pentapetalae</taxon>
        <taxon>rosids</taxon>
        <taxon>malvids</taxon>
        <taxon>Brassicales</taxon>
        <taxon>Brassicaceae</taxon>
        <taxon>Camelineae</taxon>
        <taxon>Arabidopsis</taxon>
    </lineage>
</organism>
<accession>Q9SVY0</accession>
<sequence>MAHAQTTEVCLSFHRSLLFPMGASQVVESVRFSFMTEQDVRKHSFLKVTSPILHDNVGNPFPGGLYDLKLGPKDDKQACNSCGQLKLACPGHCGHIELVFPIYHPLLFNLLFNFLQRACFFCHHFMAKPEDVERAVSQLKLIIKGDIVSAKQLESNTPTKSKSSDESCESVVTTDSSEECEDSDVEDQRWTSLQFAEVTAVLKNFMRLSSKSCSRCKGINPKLEKPMFGWVRMRAMKDSDVGANVIRGLKLKKSTSSVENPDGFDDSGIDALSEVEDGDKETREKSTEVAAEFEEHNSKRDLLPSEVRNILKHLWQNEHEFCSFIGDLWQSGSEKIDYSMFFLESVLVPPTKFRPPTTGGDSVMEHPQTVGLNKVIESNNILGNACTNKLDQSKVIFRWRNLQESVNVLFDSKTATVQSQRDSSGICQLLEKKEGLFRQKMMGKRVNHACRSVISPDPYIAVNDIGIPPCFALKLTYPERVTPWNVEKLREAIINGPDIHPGATHYSDKSSTMKLPSTEKARRAIARKLLSSRGATTELGKTCDINFEGKTVHRHMRDGDIVLVNRQPTLHKPSLMAHKVRVLKGEKTLRLHYANCSTYNADFDGDEMNVHFPQDEISRAEAYNIVNANNQYARPSNGEPLRALIQDHIVSSVLLTKRDTFLDKDHFNQLLFSSGVTDMVLSTFSGRSGKKVMVSASDAELLTVTPAILKPVPLWTGKQVITAVLNQITKGHPPFTVEKATKLPVDFFKCRSREVKPNSGDLTKKKEIDESWKQNLNEDKLHIRKNEFVCGVIDKAQFADYGLVHTVHELYGSNAAGNLLSVFSRLFTVFLQTHGFTCGVDDLIILKDMDEERTKQLQECENVGERVLRKTFGIDVDVQIDPQDMRSRIERILYEDGESALASLDRSIVNYLNQCSSKGVMNDLLSDGLLKTPGRNCISLMTISGAKGSKVNFQQISSHLGQQDLEGKRVPRMVSGKTLPCFHPWDWSPRAGGFISDRFLSGLRPQEYYFHCMAGREGLVDTAVKTSRSGYLQRCLMKNLESLKVNYDCTVRDADGSIIQFQYGEDGVDVHRSSFIEKFKELTINQDMVLQKCSEDMLSGASSYISDLPISLKKGAEKFVEAMPMNERIASKFVRQEELLKLVKSKFFASLAQPGEPVGVLAAQSVGEPSTQMTLNTFHLAGRGEMNVTLGIPRLQEILMTAAANIKTPIMTCPLLKGKTKEDANDITDRLRKITVADIIKSMELSVVPYTVYENEVCSIHKLKINLYKPEHYPKHTDITEEDWEETMRAVFLRKLEDAIETHMKMLHRIRGIHNDVTGPIAGNETDNDDSVSGKQNEDDGDDDGEGTEVDDLGSDAQKQKKQETDEMDYEENSEDETNEPSSISGVEDPEMDSENEDTEVSKEDTPEPQEESMEPQKEVKGVKNVKEQSKKKRRKFVRAKSDRHIFVKGEGEKFEVHFKFATDDPHILLAQIAQQTAQKVYIQNSGKIERCTVANCGDPQVIYHGDNPKERREISNDEKKASPALHASGVDFPALWEFQDKLDVRYLYSNSIHDMLNIFGVEAARETIIREINHVFKSYGISVSIRHLNLIADYMTFSGGYRPMSRMGGIAESTSPFCRMTFETATKFIVQAATYGEKDTLETPSARICLGLPALSGTGCFDLMQRVEL</sequence>
<protein>
    <recommendedName>
        <fullName evidence="4">DNA-directed RNA polymerase I subunit 1</fullName>
    </recommendedName>
    <alternativeName>
        <fullName evidence="4">DNA-directed RNA polymerase I subunit RPA1</fullName>
        <shortName evidence="4">DNA polymerase I subunit A1</shortName>
        <ecNumber evidence="4">2.7.7.6</ecNumber>
    </alternativeName>
    <alternativeName>
        <fullName evidence="6">Nuclear RNA polymerase A1</fullName>
    </alternativeName>
</protein>
<gene>
    <name evidence="6" type="primary">NRPA1</name>
    <name evidence="4" type="synonym">RPA1</name>
    <name evidence="5" type="ordered locus">At3g57660</name>
    <name evidence="7" type="ORF">F15B8.150</name>
</gene>
<reference key="1">
    <citation type="journal article" date="2000" name="Nature">
        <title>Sequence and analysis of chromosome 3 of the plant Arabidopsis thaliana.</title>
        <authorList>
            <person name="Salanoubat M."/>
            <person name="Lemcke K."/>
            <person name="Rieger M."/>
            <person name="Ansorge W."/>
            <person name="Unseld M."/>
            <person name="Fartmann B."/>
            <person name="Valle G."/>
            <person name="Bloecker H."/>
            <person name="Perez-Alonso M."/>
            <person name="Obermaier B."/>
            <person name="Delseny M."/>
            <person name="Boutry M."/>
            <person name="Grivell L.A."/>
            <person name="Mache R."/>
            <person name="Puigdomenech P."/>
            <person name="De Simone V."/>
            <person name="Choisne N."/>
            <person name="Artiguenave F."/>
            <person name="Robert C."/>
            <person name="Brottier P."/>
            <person name="Wincker P."/>
            <person name="Cattolico L."/>
            <person name="Weissenbach J."/>
            <person name="Saurin W."/>
            <person name="Quetier F."/>
            <person name="Schaefer M."/>
            <person name="Mueller-Auer S."/>
            <person name="Gabel C."/>
            <person name="Fuchs M."/>
            <person name="Benes V."/>
            <person name="Wurmbach E."/>
            <person name="Drzonek H."/>
            <person name="Erfle H."/>
            <person name="Jordan N."/>
            <person name="Bangert S."/>
            <person name="Wiedelmann R."/>
            <person name="Kranz H."/>
            <person name="Voss H."/>
            <person name="Holland R."/>
            <person name="Brandt P."/>
            <person name="Nyakatura G."/>
            <person name="Vezzi A."/>
            <person name="D'Angelo M."/>
            <person name="Pallavicini A."/>
            <person name="Toppo S."/>
            <person name="Simionati B."/>
            <person name="Conrad A."/>
            <person name="Hornischer K."/>
            <person name="Kauer G."/>
            <person name="Loehnert T.-H."/>
            <person name="Nordsiek G."/>
            <person name="Reichelt J."/>
            <person name="Scharfe M."/>
            <person name="Schoen O."/>
            <person name="Bargues M."/>
            <person name="Terol J."/>
            <person name="Climent J."/>
            <person name="Navarro P."/>
            <person name="Collado C."/>
            <person name="Perez-Perez A."/>
            <person name="Ottenwaelder B."/>
            <person name="Duchemin D."/>
            <person name="Cooke R."/>
            <person name="Laudie M."/>
            <person name="Berger-Llauro C."/>
            <person name="Purnelle B."/>
            <person name="Masuy D."/>
            <person name="de Haan M."/>
            <person name="Maarse A.C."/>
            <person name="Alcaraz J.-P."/>
            <person name="Cottet A."/>
            <person name="Casacuberta E."/>
            <person name="Monfort A."/>
            <person name="Argiriou A."/>
            <person name="Flores M."/>
            <person name="Liguori R."/>
            <person name="Vitale D."/>
            <person name="Mannhaupt G."/>
            <person name="Haase D."/>
            <person name="Schoof H."/>
            <person name="Rudd S."/>
            <person name="Zaccaria P."/>
            <person name="Mewes H.-W."/>
            <person name="Mayer K.F.X."/>
            <person name="Kaul S."/>
            <person name="Town C.D."/>
            <person name="Koo H.L."/>
            <person name="Tallon L.J."/>
            <person name="Jenkins J."/>
            <person name="Rooney T."/>
            <person name="Rizzo M."/>
            <person name="Walts A."/>
            <person name="Utterback T."/>
            <person name="Fujii C.Y."/>
            <person name="Shea T.P."/>
            <person name="Creasy T.H."/>
            <person name="Haas B."/>
            <person name="Maiti R."/>
            <person name="Wu D."/>
            <person name="Peterson J."/>
            <person name="Van Aken S."/>
            <person name="Pai G."/>
            <person name="Militscher J."/>
            <person name="Sellers P."/>
            <person name="Gill J.E."/>
            <person name="Feldblyum T.V."/>
            <person name="Preuss D."/>
            <person name="Lin X."/>
            <person name="Nierman W.C."/>
            <person name="Salzberg S.L."/>
            <person name="White O."/>
            <person name="Venter J.C."/>
            <person name="Fraser C.M."/>
            <person name="Kaneko T."/>
            <person name="Nakamura Y."/>
            <person name="Sato S."/>
            <person name="Kato T."/>
            <person name="Asamizu E."/>
            <person name="Sasamoto S."/>
            <person name="Kimura T."/>
            <person name="Idesawa K."/>
            <person name="Kawashima K."/>
            <person name="Kishida Y."/>
            <person name="Kiyokawa C."/>
            <person name="Kohara M."/>
            <person name="Matsumoto M."/>
            <person name="Matsuno A."/>
            <person name="Muraki A."/>
            <person name="Nakayama S."/>
            <person name="Nakazaki N."/>
            <person name="Shinpo S."/>
            <person name="Takeuchi C."/>
            <person name="Wada T."/>
            <person name="Watanabe A."/>
            <person name="Yamada M."/>
            <person name="Yasuda M."/>
            <person name="Tabata S."/>
        </authorList>
    </citation>
    <scope>NUCLEOTIDE SEQUENCE [LARGE SCALE GENOMIC DNA]</scope>
    <source>
        <strain>cv. Columbia</strain>
    </source>
</reference>
<reference key="2">
    <citation type="journal article" date="2017" name="Plant J.">
        <title>Araport11: a complete reannotation of the Arabidopsis thaliana reference genome.</title>
        <authorList>
            <person name="Cheng C.Y."/>
            <person name="Krishnakumar V."/>
            <person name="Chan A.P."/>
            <person name="Thibaud-Nissen F."/>
            <person name="Schobel S."/>
            <person name="Town C.D."/>
        </authorList>
    </citation>
    <scope>GENOME REANNOTATION</scope>
    <source>
        <strain>cv. Columbia</strain>
    </source>
</reference>
<keyword id="KW-0240">DNA-directed RNA polymerase</keyword>
<keyword id="KW-0460">Magnesium</keyword>
<keyword id="KW-0479">Metal-binding</keyword>
<keyword id="KW-0548">Nucleotidyltransferase</keyword>
<keyword id="KW-0539">Nucleus</keyword>
<keyword id="KW-1185">Reference proteome</keyword>
<keyword id="KW-0690">Ribosome biogenesis</keyword>
<keyword id="KW-0804">Transcription</keyword>
<keyword id="KW-0808">Transferase</keyword>
<keyword id="KW-0862">Zinc</keyword>
<proteinExistence type="inferred from homology"/>
<comment type="function">
    <text evidence="2">DNA-dependent RNA polymerase catalyzes the transcription of DNA into RNA using the four ribonucleoside triphosphates as substrates. Largest and catalytic core component of RNA polymerase I which synthesizes ribosomal RNA precursors. Forms the polymerase active center together with the second largest subunit. A single stranded DNA template strand of the promoter is positioned within the central active site cleft of Pol I. A bridging helix emanates from NRPA1 and crosses the cleft near the catalytic site and is thought to promote translocation of Pol I by acting as a ratchet that moves the RNA-DNA hybrid through the active site by switching from straight to bent conformations at each step of nucleotide addition.</text>
</comment>
<comment type="catalytic activity">
    <reaction evidence="4">
        <text>RNA(n) + a ribonucleoside 5'-triphosphate = RNA(n+1) + diphosphate</text>
        <dbReference type="Rhea" id="RHEA:21248"/>
        <dbReference type="Rhea" id="RHEA-COMP:14527"/>
        <dbReference type="Rhea" id="RHEA-COMP:17342"/>
        <dbReference type="ChEBI" id="CHEBI:33019"/>
        <dbReference type="ChEBI" id="CHEBI:61557"/>
        <dbReference type="ChEBI" id="CHEBI:140395"/>
        <dbReference type="EC" id="2.7.7.6"/>
    </reaction>
</comment>
<comment type="subunit">
    <text evidence="2">Component of the RNA polymerase I (Pol I) complex consisting of at least 13 subunits.</text>
</comment>
<comment type="subcellular location">
    <subcellularLocation>
        <location evidence="2">Nucleus</location>
    </subcellularLocation>
</comment>
<comment type="similarity">
    <text evidence="4">Belongs to the RNA polymerase beta' chain family.</text>
</comment>
<dbReference type="EC" id="2.7.7.6" evidence="4"/>
<dbReference type="EMBL" id="AL049660">
    <property type="protein sequence ID" value="CAB41189.1"/>
    <property type="molecule type" value="Genomic_DNA"/>
</dbReference>
<dbReference type="EMBL" id="CP002686">
    <property type="protein sequence ID" value="AEE79684.1"/>
    <property type="molecule type" value="Genomic_DNA"/>
</dbReference>
<dbReference type="PIR" id="T06754">
    <property type="entry name" value="T06754"/>
</dbReference>
<dbReference type="RefSeq" id="NP_191325.1">
    <property type="nucleotide sequence ID" value="NM_115626.1"/>
</dbReference>
<dbReference type="SMR" id="Q9SVY0"/>
<dbReference type="FunCoup" id="Q9SVY0">
    <property type="interactions" value="4071"/>
</dbReference>
<dbReference type="IntAct" id="Q9SVY0">
    <property type="interactions" value="2"/>
</dbReference>
<dbReference type="STRING" id="3702.Q9SVY0"/>
<dbReference type="iPTMnet" id="Q9SVY0"/>
<dbReference type="PaxDb" id="3702-AT3G57660.1"/>
<dbReference type="ProteomicsDB" id="250600"/>
<dbReference type="EnsemblPlants" id="AT3G57660.1">
    <property type="protein sequence ID" value="AT3G57660.1"/>
    <property type="gene ID" value="AT3G57660"/>
</dbReference>
<dbReference type="GeneID" id="824935"/>
<dbReference type="Gramene" id="AT3G57660.1">
    <property type="protein sequence ID" value="AT3G57660.1"/>
    <property type="gene ID" value="AT3G57660"/>
</dbReference>
<dbReference type="KEGG" id="ath:AT3G57660"/>
<dbReference type="Araport" id="AT3G57660"/>
<dbReference type="TAIR" id="AT3G57660">
    <property type="gene designation" value="NRPA1"/>
</dbReference>
<dbReference type="eggNOG" id="KOG0262">
    <property type="taxonomic scope" value="Eukaryota"/>
</dbReference>
<dbReference type="HOGENOM" id="CLU_000487_2_4_1"/>
<dbReference type="InParanoid" id="Q9SVY0"/>
<dbReference type="OrthoDB" id="270392at2759"/>
<dbReference type="PhylomeDB" id="Q9SVY0"/>
<dbReference type="PRO" id="PR:Q9SVY0"/>
<dbReference type="Proteomes" id="UP000006548">
    <property type="component" value="Chromosome 3"/>
</dbReference>
<dbReference type="ExpressionAtlas" id="Q9SVY0">
    <property type="expression patterns" value="baseline and differential"/>
</dbReference>
<dbReference type="GO" id="GO:0005739">
    <property type="term" value="C:mitochondrion"/>
    <property type="evidence" value="ECO:0007669"/>
    <property type="project" value="GOC"/>
</dbReference>
<dbReference type="GO" id="GO:0005634">
    <property type="term" value="C:nucleus"/>
    <property type="evidence" value="ECO:0007005"/>
    <property type="project" value="TAIR"/>
</dbReference>
<dbReference type="GO" id="GO:0009506">
    <property type="term" value="C:plasmodesma"/>
    <property type="evidence" value="ECO:0007005"/>
    <property type="project" value="TAIR"/>
</dbReference>
<dbReference type="GO" id="GO:0009536">
    <property type="term" value="C:plastid"/>
    <property type="evidence" value="ECO:0007669"/>
    <property type="project" value="GOC"/>
</dbReference>
<dbReference type="GO" id="GO:0005736">
    <property type="term" value="C:RNA polymerase I complex"/>
    <property type="evidence" value="ECO:0007669"/>
    <property type="project" value="UniProtKB-ARBA"/>
</dbReference>
<dbReference type="GO" id="GO:0003677">
    <property type="term" value="F:DNA binding"/>
    <property type="evidence" value="ECO:0007669"/>
    <property type="project" value="InterPro"/>
</dbReference>
<dbReference type="GO" id="GO:0003899">
    <property type="term" value="F:DNA-directed RNA polymerase activity"/>
    <property type="evidence" value="ECO:0007669"/>
    <property type="project" value="UniProtKB-EC"/>
</dbReference>
<dbReference type="GO" id="GO:0046872">
    <property type="term" value="F:metal ion binding"/>
    <property type="evidence" value="ECO:0007669"/>
    <property type="project" value="UniProtKB-KW"/>
</dbReference>
<dbReference type="GO" id="GO:0006351">
    <property type="term" value="P:DNA-templated transcription"/>
    <property type="evidence" value="ECO:0007669"/>
    <property type="project" value="InterPro"/>
</dbReference>
<dbReference type="GO" id="GO:0042254">
    <property type="term" value="P:ribosome biogenesis"/>
    <property type="evidence" value="ECO:0007669"/>
    <property type="project" value="UniProtKB-KW"/>
</dbReference>
<dbReference type="CDD" id="cd02735">
    <property type="entry name" value="RNAP_I_Rpa1_C"/>
    <property type="match status" value="1"/>
</dbReference>
<dbReference type="CDD" id="cd01435">
    <property type="entry name" value="RNAP_I_RPA1_N"/>
    <property type="match status" value="1"/>
</dbReference>
<dbReference type="FunFam" id="2.40.40.20:FF:000019">
    <property type="entry name" value="DNA-directed RNA polymerase II subunit RPB1"/>
    <property type="match status" value="1"/>
</dbReference>
<dbReference type="FunFam" id="1.10.132.30:FF:000006">
    <property type="entry name" value="DNA-directed RNA polymerase subunit"/>
    <property type="match status" value="1"/>
</dbReference>
<dbReference type="FunFam" id="1.10.274.100:FF:000015">
    <property type="entry name" value="DNA-directed RNA polymerase subunit"/>
    <property type="match status" value="1"/>
</dbReference>
<dbReference type="Gene3D" id="1.10.132.30">
    <property type="match status" value="1"/>
</dbReference>
<dbReference type="Gene3D" id="1.10.150.390">
    <property type="match status" value="1"/>
</dbReference>
<dbReference type="Gene3D" id="2.40.40.20">
    <property type="match status" value="1"/>
</dbReference>
<dbReference type="Gene3D" id="3.30.70.2850">
    <property type="match status" value="1"/>
</dbReference>
<dbReference type="Gene3D" id="6.10.250.2940">
    <property type="match status" value="1"/>
</dbReference>
<dbReference type="Gene3D" id="6.20.50.80">
    <property type="match status" value="1"/>
</dbReference>
<dbReference type="Gene3D" id="3.30.1490.180">
    <property type="entry name" value="RNA polymerase ii"/>
    <property type="match status" value="1"/>
</dbReference>
<dbReference type="Gene3D" id="4.10.860.120">
    <property type="entry name" value="RNA polymerase II, clamp domain"/>
    <property type="match status" value="1"/>
</dbReference>
<dbReference type="Gene3D" id="1.10.274.100">
    <property type="entry name" value="RNA polymerase Rpb1, domain 3"/>
    <property type="match status" value="1"/>
</dbReference>
<dbReference type="InterPro" id="IPR047107">
    <property type="entry name" value="DNA-dir_RNA_pol1_lsu_C"/>
</dbReference>
<dbReference type="InterPro" id="IPR015699">
    <property type="entry name" value="DNA-dir_RNA_pol1_lsu_N"/>
</dbReference>
<dbReference type="InterPro" id="IPR045867">
    <property type="entry name" value="DNA-dir_RpoC_beta_prime"/>
</dbReference>
<dbReference type="InterPro" id="IPR000722">
    <property type="entry name" value="RNA_pol_asu"/>
</dbReference>
<dbReference type="InterPro" id="IPR006592">
    <property type="entry name" value="RNA_pol_N"/>
</dbReference>
<dbReference type="InterPro" id="IPR007080">
    <property type="entry name" value="RNA_pol_Rpb1_1"/>
</dbReference>
<dbReference type="InterPro" id="IPR007066">
    <property type="entry name" value="RNA_pol_Rpb1_3"/>
</dbReference>
<dbReference type="InterPro" id="IPR042102">
    <property type="entry name" value="RNA_pol_Rpb1_3_sf"/>
</dbReference>
<dbReference type="InterPro" id="IPR007083">
    <property type="entry name" value="RNA_pol_Rpb1_4"/>
</dbReference>
<dbReference type="InterPro" id="IPR007081">
    <property type="entry name" value="RNA_pol_Rpb1_5"/>
</dbReference>
<dbReference type="InterPro" id="IPR044893">
    <property type="entry name" value="RNA_pol_Rpb1_clamp_domain"/>
</dbReference>
<dbReference type="InterPro" id="IPR038120">
    <property type="entry name" value="Rpb1_funnel_sf"/>
</dbReference>
<dbReference type="PANTHER" id="PTHR19376">
    <property type="entry name" value="DNA-DIRECTED RNA POLYMERASE"/>
    <property type="match status" value="1"/>
</dbReference>
<dbReference type="PANTHER" id="PTHR19376:SF11">
    <property type="entry name" value="DNA-DIRECTED RNA POLYMERASE I SUBUNIT RPA1"/>
    <property type="match status" value="1"/>
</dbReference>
<dbReference type="Pfam" id="PF04997">
    <property type="entry name" value="RNA_pol_Rpb1_1"/>
    <property type="match status" value="1"/>
</dbReference>
<dbReference type="Pfam" id="PF00623">
    <property type="entry name" value="RNA_pol_Rpb1_2"/>
    <property type="match status" value="1"/>
</dbReference>
<dbReference type="Pfam" id="PF04983">
    <property type="entry name" value="RNA_pol_Rpb1_3"/>
    <property type="match status" value="1"/>
</dbReference>
<dbReference type="Pfam" id="PF05000">
    <property type="entry name" value="RNA_pol_Rpb1_4"/>
    <property type="match status" value="1"/>
</dbReference>
<dbReference type="Pfam" id="PF04998">
    <property type="entry name" value="RNA_pol_Rpb1_5"/>
    <property type="match status" value="1"/>
</dbReference>
<dbReference type="SMART" id="SM00663">
    <property type="entry name" value="RPOLA_N"/>
    <property type="match status" value="1"/>
</dbReference>
<dbReference type="SUPFAM" id="SSF64484">
    <property type="entry name" value="beta and beta-prime subunits of DNA dependent RNA-polymerase"/>
    <property type="match status" value="1"/>
</dbReference>
<name>NRPA1_ARATH</name>
<evidence type="ECO:0000250" key="1">
    <source>
        <dbReference type="UniProtKB" id="P04050"/>
    </source>
</evidence>
<evidence type="ECO:0000250" key="2">
    <source>
        <dbReference type="UniProtKB" id="P10964"/>
    </source>
</evidence>
<evidence type="ECO:0000256" key="3">
    <source>
        <dbReference type="SAM" id="MobiDB-lite"/>
    </source>
</evidence>
<evidence type="ECO:0000305" key="4"/>
<evidence type="ECO:0000312" key="5">
    <source>
        <dbReference type="Araport" id="AT3G57660"/>
    </source>
</evidence>
<evidence type="ECO:0000312" key="6">
    <source>
        <dbReference type="EMBL" id="AEE79684.1"/>
    </source>
</evidence>
<evidence type="ECO:0000312" key="7">
    <source>
        <dbReference type="EMBL" id="CAB41189.1"/>
    </source>
</evidence>